<evidence type="ECO:0000255" key="1">
    <source>
        <dbReference type="HAMAP-Rule" id="MF_01543"/>
    </source>
</evidence>
<organism>
    <name type="scientific">Staphylococcus aureus (strain MSSA476)</name>
    <dbReference type="NCBI Taxonomy" id="282459"/>
    <lineage>
        <taxon>Bacteria</taxon>
        <taxon>Bacillati</taxon>
        <taxon>Bacillota</taxon>
        <taxon>Bacilli</taxon>
        <taxon>Bacillales</taxon>
        <taxon>Staphylococcaceae</taxon>
        <taxon>Staphylococcus</taxon>
    </lineage>
</organism>
<keyword id="KW-0067">ATP-binding</keyword>
<keyword id="KW-0436">Ligase</keyword>
<keyword id="KW-0547">Nucleotide-binding</keyword>
<keyword id="KW-0554">One-carbon metabolism</keyword>
<dbReference type="EC" id="6.3.4.3" evidence="1"/>
<dbReference type="EMBL" id="BX571857">
    <property type="protein sequence ID" value="CAG43461.1"/>
    <property type="molecule type" value="Genomic_DNA"/>
</dbReference>
<dbReference type="RefSeq" id="WP_000149412.1">
    <property type="nucleotide sequence ID" value="NC_002953.3"/>
</dbReference>
<dbReference type="SMR" id="Q6G8J5"/>
<dbReference type="KEGG" id="sas:SAS1658"/>
<dbReference type="HOGENOM" id="CLU_003601_3_3_9"/>
<dbReference type="UniPathway" id="UPA00193"/>
<dbReference type="GO" id="GO:0005524">
    <property type="term" value="F:ATP binding"/>
    <property type="evidence" value="ECO:0007669"/>
    <property type="project" value="UniProtKB-UniRule"/>
</dbReference>
<dbReference type="GO" id="GO:0004329">
    <property type="term" value="F:formate-tetrahydrofolate ligase activity"/>
    <property type="evidence" value="ECO:0007669"/>
    <property type="project" value="UniProtKB-UniRule"/>
</dbReference>
<dbReference type="GO" id="GO:0035999">
    <property type="term" value="P:tetrahydrofolate interconversion"/>
    <property type="evidence" value="ECO:0007669"/>
    <property type="project" value="UniProtKB-UniRule"/>
</dbReference>
<dbReference type="CDD" id="cd00477">
    <property type="entry name" value="FTHFS"/>
    <property type="match status" value="1"/>
</dbReference>
<dbReference type="FunFam" id="3.30.1510.10:FF:000001">
    <property type="entry name" value="Formate--tetrahydrofolate ligase"/>
    <property type="match status" value="1"/>
</dbReference>
<dbReference type="FunFam" id="3.10.410.10:FF:000001">
    <property type="entry name" value="Putative formate--tetrahydrofolate ligase"/>
    <property type="match status" value="1"/>
</dbReference>
<dbReference type="Gene3D" id="3.30.1510.10">
    <property type="entry name" value="Domain 2, N(10)-formyltetrahydrofolate synthetase"/>
    <property type="match status" value="1"/>
</dbReference>
<dbReference type="Gene3D" id="3.10.410.10">
    <property type="entry name" value="Formyltetrahydrofolate synthetase, domain 3"/>
    <property type="match status" value="1"/>
</dbReference>
<dbReference type="Gene3D" id="3.40.50.300">
    <property type="entry name" value="P-loop containing nucleotide triphosphate hydrolases"/>
    <property type="match status" value="1"/>
</dbReference>
<dbReference type="HAMAP" id="MF_01543">
    <property type="entry name" value="FTHFS"/>
    <property type="match status" value="1"/>
</dbReference>
<dbReference type="InterPro" id="IPR000559">
    <property type="entry name" value="Formate_THF_ligase"/>
</dbReference>
<dbReference type="InterPro" id="IPR020628">
    <property type="entry name" value="Formate_THF_ligase_CS"/>
</dbReference>
<dbReference type="InterPro" id="IPR027417">
    <property type="entry name" value="P-loop_NTPase"/>
</dbReference>
<dbReference type="NCBIfam" id="NF010030">
    <property type="entry name" value="PRK13505.1"/>
    <property type="match status" value="1"/>
</dbReference>
<dbReference type="Pfam" id="PF01268">
    <property type="entry name" value="FTHFS"/>
    <property type="match status" value="1"/>
</dbReference>
<dbReference type="SUPFAM" id="SSF52540">
    <property type="entry name" value="P-loop containing nucleoside triphosphate hydrolases"/>
    <property type="match status" value="1"/>
</dbReference>
<dbReference type="PROSITE" id="PS00721">
    <property type="entry name" value="FTHFS_1"/>
    <property type="match status" value="1"/>
</dbReference>
<dbReference type="PROSITE" id="PS00722">
    <property type="entry name" value="FTHFS_2"/>
    <property type="match status" value="1"/>
</dbReference>
<name>FTHS_STAAS</name>
<gene>
    <name evidence="1" type="primary">fhs</name>
    <name type="ordered locus">SAS1658</name>
</gene>
<sequence length="555" mass="59856">MTHLSDLDIANQSTLQPIKDIAASVGISEDALEPYGHYKAKIDINKITPRENKGKVVLVTAMSPTPAGEGKSTVTVGLADAFHELNKNVMVALREPALGPTFGIKGGATGGGYAQVLPMEDINLHFNGDFHAITTANNALSAFIDNHIHQGNELGIDQRRIEWKRVLDMNDRALRHVNVGLGGPTNGVPREDGFNITVASEIMAILCLSRSIKDLKDKISRITIGYTRDRKPVTVADLKVQGALAMILKDAIKPNLVQSIEGTPALVHGGPFANIAHGCNSILATETARDLADIVVTEAGFGSDLGAEKFMDIKAREAGFDPAAVVVVATIRALKMHGGVAKDNLKEENVEAVKAGIVNLERHVNNIKKFGVEPVVAINAFIHDTDAEVEYVKSWAKENNVRIALTEVWEKGGKGGVDLANEVLEVIDQPNSFKPLYELELPLEQKIEKIVTEIYGGSKVTFSSKAQKQLKQFKENGWDNYPVCMAKTQYSFSDDQTLLGAPSGFEITIRELEAKTGAGFIVALTGAIMTMPGLPKKPAALNMDVTDDGHAIGLF</sequence>
<feature type="chain" id="PRO_0000199377" description="Formate--tetrahydrofolate ligase">
    <location>
        <begin position="1"/>
        <end position="555"/>
    </location>
</feature>
<feature type="binding site" evidence="1">
    <location>
        <begin position="65"/>
        <end position="72"/>
    </location>
    <ligand>
        <name>ATP</name>
        <dbReference type="ChEBI" id="CHEBI:30616"/>
    </ligand>
</feature>
<proteinExistence type="inferred from homology"/>
<comment type="catalytic activity">
    <reaction evidence="1">
        <text>(6S)-5,6,7,8-tetrahydrofolate + formate + ATP = (6R)-10-formyltetrahydrofolate + ADP + phosphate</text>
        <dbReference type="Rhea" id="RHEA:20221"/>
        <dbReference type="ChEBI" id="CHEBI:15740"/>
        <dbReference type="ChEBI" id="CHEBI:30616"/>
        <dbReference type="ChEBI" id="CHEBI:43474"/>
        <dbReference type="ChEBI" id="CHEBI:57453"/>
        <dbReference type="ChEBI" id="CHEBI:195366"/>
        <dbReference type="ChEBI" id="CHEBI:456216"/>
        <dbReference type="EC" id="6.3.4.3"/>
    </reaction>
</comment>
<comment type="pathway">
    <text evidence="1">One-carbon metabolism; tetrahydrofolate interconversion.</text>
</comment>
<comment type="similarity">
    <text evidence="1">Belongs to the formate--tetrahydrofolate ligase family.</text>
</comment>
<protein>
    <recommendedName>
        <fullName evidence="1">Formate--tetrahydrofolate ligase</fullName>
        <ecNumber evidence="1">6.3.4.3</ecNumber>
    </recommendedName>
    <alternativeName>
        <fullName evidence="1">Formyltetrahydrofolate synthetase</fullName>
        <shortName evidence="1">FHS</shortName>
        <shortName evidence="1">FTHFS</shortName>
    </alternativeName>
</protein>
<accession>Q6G8J5</accession>
<reference key="1">
    <citation type="journal article" date="2004" name="Proc. Natl. Acad. Sci. U.S.A.">
        <title>Complete genomes of two clinical Staphylococcus aureus strains: evidence for the rapid evolution of virulence and drug resistance.</title>
        <authorList>
            <person name="Holden M.T.G."/>
            <person name="Feil E.J."/>
            <person name="Lindsay J.A."/>
            <person name="Peacock S.J."/>
            <person name="Day N.P.J."/>
            <person name="Enright M.C."/>
            <person name="Foster T.J."/>
            <person name="Moore C.E."/>
            <person name="Hurst L."/>
            <person name="Atkin R."/>
            <person name="Barron A."/>
            <person name="Bason N."/>
            <person name="Bentley S.D."/>
            <person name="Chillingworth C."/>
            <person name="Chillingworth T."/>
            <person name="Churcher C."/>
            <person name="Clark L."/>
            <person name="Corton C."/>
            <person name="Cronin A."/>
            <person name="Doggett J."/>
            <person name="Dowd L."/>
            <person name="Feltwell T."/>
            <person name="Hance Z."/>
            <person name="Harris B."/>
            <person name="Hauser H."/>
            <person name="Holroyd S."/>
            <person name="Jagels K."/>
            <person name="James K.D."/>
            <person name="Lennard N."/>
            <person name="Line A."/>
            <person name="Mayes R."/>
            <person name="Moule S."/>
            <person name="Mungall K."/>
            <person name="Ormond D."/>
            <person name="Quail M.A."/>
            <person name="Rabbinowitsch E."/>
            <person name="Rutherford K.M."/>
            <person name="Sanders M."/>
            <person name="Sharp S."/>
            <person name="Simmonds M."/>
            <person name="Stevens K."/>
            <person name="Whitehead S."/>
            <person name="Barrell B.G."/>
            <person name="Spratt B.G."/>
            <person name="Parkhill J."/>
        </authorList>
    </citation>
    <scope>NUCLEOTIDE SEQUENCE [LARGE SCALE GENOMIC DNA]</scope>
    <source>
        <strain>MSSA476</strain>
    </source>
</reference>